<organism>
    <name type="scientific">Methylobacterium radiotolerans (strain ATCC 27329 / DSM 1819 / JCM 2831 / NBRC 15690 / NCIMB 10815 / 0-1)</name>
    <dbReference type="NCBI Taxonomy" id="426355"/>
    <lineage>
        <taxon>Bacteria</taxon>
        <taxon>Pseudomonadati</taxon>
        <taxon>Pseudomonadota</taxon>
        <taxon>Alphaproteobacteria</taxon>
        <taxon>Hyphomicrobiales</taxon>
        <taxon>Methylobacteriaceae</taxon>
        <taxon>Methylobacterium</taxon>
    </lineage>
</organism>
<feature type="chain" id="PRO_1000133441" description="Light-independent protochlorophyllide reductase iron-sulfur ATP-binding protein">
    <location>
        <begin position="1"/>
        <end position="297"/>
    </location>
</feature>
<feature type="binding site" evidence="1">
    <location>
        <begin position="41"/>
        <end position="46"/>
    </location>
    <ligand>
        <name>ATP</name>
        <dbReference type="ChEBI" id="CHEBI:30616"/>
    </ligand>
</feature>
<feature type="binding site" evidence="1">
    <location>
        <position position="45"/>
    </location>
    <ligand>
        <name>Mg(2+)</name>
        <dbReference type="ChEBI" id="CHEBI:18420"/>
    </ligand>
</feature>
<feature type="binding site" evidence="1">
    <location>
        <position position="70"/>
    </location>
    <ligand>
        <name>ATP</name>
        <dbReference type="ChEBI" id="CHEBI:30616"/>
    </ligand>
</feature>
<feature type="binding site" evidence="1">
    <location>
        <position position="126"/>
    </location>
    <ligand>
        <name>[4Fe-4S] cluster</name>
        <dbReference type="ChEBI" id="CHEBI:49883"/>
        <note>ligand shared between dimeric partners</note>
    </ligand>
</feature>
<feature type="binding site" evidence="1">
    <location>
        <position position="160"/>
    </location>
    <ligand>
        <name>[4Fe-4S] cluster</name>
        <dbReference type="ChEBI" id="CHEBI:49883"/>
        <note>ligand shared between dimeric partners</note>
    </ligand>
</feature>
<feature type="binding site" evidence="1">
    <location>
        <begin position="211"/>
        <end position="212"/>
    </location>
    <ligand>
        <name>ATP</name>
        <dbReference type="ChEBI" id="CHEBI:30616"/>
    </ligand>
</feature>
<feature type="binding site" evidence="1">
    <location>
        <begin position="235"/>
        <end position="237"/>
    </location>
    <ligand>
        <name>ATP</name>
        <dbReference type="ChEBI" id="CHEBI:30616"/>
    </ligand>
</feature>
<dbReference type="EC" id="1.3.7.7" evidence="1"/>
<dbReference type="EMBL" id="CP001001">
    <property type="protein sequence ID" value="ACB23840.1"/>
    <property type="molecule type" value="Genomic_DNA"/>
</dbReference>
<dbReference type="RefSeq" id="WP_012318826.1">
    <property type="nucleotide sequence ID" value="NC_010505.1"/>
</dbReference>
<dbReference type="SMR" id="B1LSF9"/>
<dbReference type="STRING" id="426355.Mrad2831_1845"/>
<dbReference type="GeneID" id="6137874"/>
<dbReference type="KEGG" id="mrd:Mrad2831_1845"/>
<dbReference type="eggNOG" id="COG1348">
    <property type="taxonomic scope" value="Bacteria"/>
</dbReference>
<dbReference type="HOGENOM" id="CLU_059373_2_0_5"/>
<dbReference type="OrthoDB" id="9778641at2"/>
<dbReference type="UniPathway" id="UPA00671"/>
<dbReference type="Proteomes" id="UP000006589">
    <property type="component" value="Chromosome"/>
</dbReference>
<dbReference type="GO" id="GO:0051539">
    <property type="term" value="F:4 iron, 4 sulfur cluster binding"/>
    <property type="evidence" value="ECO:0007669"/>
    <property type="project" value="UniProtKB-UniRule"/>
</dbReference>
<dbReference type="GO" id="GO:0005524">
    <property type="term" value="F:ATP binding"/>
    <property type="evidence" value="ECO:0007669"/>
    <property type="project" value="UniProtKB-UniRule"/>
</dbReference>
<dbReference type="GO" id="GO:0046872">
    <property type="term" value="F:metal ion binding"/>
    <property type="evidence" value="ECO:0007669"/>
    <property type="project" value="UniProtKB-KW"/>
</dbReference>
<dbReference type="GO" id="GO:0016730">
    <property type="term" value="F:oxidoreductase activity, acting on iron-sulfur proteins as donors"/>
    <property type="evidence" value="ECO:0007669"/>
    <property type="project" value="InterPro"/>
</dbReference>
<dbReference type="GO" id="GO:0016636">
    <property type="term" value="F:oxidoreductase activity, acting on the CH-CH group of donors, iron-sulfur protein as acceptor"/>
    <property type="evidence" value="ECO:0007669"/>
    <property type="project" value="UniProtKB-UniRule"/>
</dbReference>
<dbReference type="GO" id="GO:0036070">
    <property type="term" value="P:light-independent bacteriochlorophyll biosynthetic process"/>
    <property type="evidence" value="ECO:0007669"/>
    <property type="project" value="UniProtKB-UniRule"/>
</dbReference>
<dbReference type="GO" id="GO:0019685">
    <property type="term" value="P:photosynthesis, dark reaction"/>
    <property type="evidence" value="ECO:0007669"/>
    <property type="project" value="InterPro"/>
</dbReference>
<dbReference type="CDD" id="cd02032">
    <property type="entry name" value="Bchl-like"/>
    <property type="match status" value="1"/>
</dbReference>
<dbReference type="Gene3D" id="3.40.50.300">
    <property type="entry name" value="P-loop containing nucleotide triphosphate hydrolases"/>
    <property type="match status" value="1"/>
</dbReference>
<dbReference type="HAMAP" id="MF_00355">
    <property type="entry name" value="ChlL_BchL"/>
    <property type="match status" value="1"/>
</dbReference>
<dbReference type="InterPro" id="IPR030655">
    <property type="entry name" value="NifH/chlL_CS"/>
</dbReference>
<dbReference type="InterPro" id="IPR000392">
    <property type="entry name" value="NifH/frxC"/>
</dbReference>
<dbReference type="InterPro" id="IPR027417">
    <property type="entry name" value="P-loop_NTPase"/>
</dbReference>
<dbReference type="InterPro" id="IPR005971">
    <property type="entry name" value="Protochlorophyllide_ATP-bd"/>
</dbReference>
<dbReference type="NCBIfam" id="TIGR01281">
    <property type="entry name" value="DPOR_bchL"/>
    <property type="match status" value="1"/>
</dbReference>
<dbReference type="PANTHER" id="PTHR42864">
    <property type="entry name" value="LIGHT-INDEPENDENT PROTOCHLOROPHYLLIDE REDUCTASE IRON-SULFUR ATP-BINDING PROTEIN"/>
    <property type="match status" value="1"/>
</dbReference>
<dbReference type="PANTHER" id="PTHR42864:SF2">
    <property type="entry name" value="LIGHT-INDEPENDENT PROTOCHLOROPHYLLIDE REDUCTASE IRON-SULFUR ATP-BINDING PROTEIN"/>
    <property type="match status" value="1"/>
</dbReference>
<dbReference type="Pfam" id="PF00142">
    <property type="entry name" value="Fer4_NifH"/>
    <property type="match status" value="1"/>
</dbReference>
<dbReference type="PIRSF" id="PIRSF000363">
    <property type="entry name" value="Nitrogenase_iron"/>
    <property type="match status" value="1"/>
</dbReference>
<dbReference type="PRINTS" id="PR00091">
    <property type="entry name" value="NITROGNASEII"/>
</dbReference>
<dbReference type="SUPFAM" id="SSF52540">
    <property type="entry name" value="P-loop containing nucleoside triphosphate hydrolases"/>
    <property type="match status" value="1"/>
</dbReference>
<dbReference type="PROSITE" id="PS00746">
    <property type="entry name" value="NIFH_FRXC_1"/>
    <property type="match status" value="1"/>
</dbReference>
<dbReference type="PROSITE" id="PS00692">
    <property type="entry name" value="NIFH_FRXC_2"/>
    <property type="match status" value="1"/>
</dbReference>
<dbReference type="PROSITE" id="PS51026">
    <property type="entry name" value="NIFH_FRXC_3"/>
    <property type="match status" value="1"/>
</dbReference>
<protein>
    <recommendedName>
        <fullName evidence="1">Light-independent protochlorophyllide reductase iron-sulfur ATP-binding protein</fullName>
        <shortName evidence="1">DPOR subunit L</shortName>
        <shortName evidence="1">LI-POR subunit L</shortName>
        <ecNumber evidence="1">1.3.7.7</ecNumber>
    </recommendedName>
</protein>
<keyword id="KW-0004">4Fe-4S</keyword>
<keyword id="KW-0067">ATP-binding</keyword>
<keyword id="KW-0077">Bacteriochlorophyll biosynthesis</keyword>
<keyword id="KW-0149">Chlorophyll biosynthesis</keyword>
<keyword id="KW-0408">Iron</keyword>
<keyword id="KW-0411">Iron-sulfur</keyword>
<keyword id="KW-0460">Magnesium</keyword>
<keyword id="KW-0479">Metal-binding</keyword>
<keyword id="KW-0547">Nucleotide-binding</keyword>
<keyword id="KW-0560">Oxidoreductase</keyword>
<keyword id="KW-0602">Photosynthesis</keyword>
<evidence type="ECO:0000255" key="1">
    <source>
        <dbReference type="HAMAP-Rule" id="MF_00355"/>
    </source>
</evidence>
<gene>
    <name evidence="1" type="primary">bchL</name>
    <name type="ordered locus">Mrad2831_1845</name>
</gene>
<name>BCHL_METRJ</name>
<comment type="function">
    <text evidence="1">Component of the dark-operative protochlorophyllide reductase (DPOR) that uses Mg-ATP and reduced ferredoxin to reduce ring D of protochlorophyllide (Pchlide) to form chlorophyllide a (Chlide). This reaction is light-independent. The L component serves as a unique electron donor to the NB-component of the complex, and binds Mg-ATP.</text>
</comment>
<comment type="catalytic activity">
    <reaction evidence="1">
        <text>chlorophyllide a + oxidized 2[4Fe-4S]-[ferredoxin] + 2 ADP + 2 phosphate = protochlorophyllide a + reduced 2[4Fe-4S]-[ferredoxin] + 2 ATP + 2 H2O</text>
        <dbReference type="Rhea" id="RHEA:28202"/>
        <dbReference type="Rhea" id="RHEA-COMP:10002"/>
        <dbReference type="Rhea" id="RHEA-COMP:10004"/>
        <dbReference type="ChEBI" id="CHEBI:15377"/>
        <dbReference type="ChEBI" id="CHEBI:30616"/>
        <dbReference type="ChEBI" id="CHEBI:33722"/>
        <dbReference type="ChEBI" id="CHEBI:33723"/>
        <dbReference type="ChEBI" id="CHEBI:43474"/>
        <dbReference type="ChEBI" id="CHEBI:83348"/>
        <dbReference type="ChEBI" id="CHEBI:83350"/>
        <dbReference type="ChEBI" id="CHEBI:456216"/>
        <dbReference type="EC" id="1.3.7.7"/>
    </reaction>
</comment>
<comment type="cofactor">
    <cofactor evidence="1">
        <name>[4Fe-4S] cluster</name>
        <dbReference type="ChEBI" id="CHEBI:49883"/>
    </cofactor>
    <text evidence="1">Binds 1 [4Fe-4S] cluster per dimer.</text>
</comment>
<comment type="pathway">
    <text evidence="1">Porphyrin-containing compound metabolism; bacteriochlorophyll biosynthesis (light-independent).</text>
</comment>
<comment type="subunit">
    <text evidence="1">Homodimer. Protochlorophyllide reductase is composed of three subunits; BchL, BchN and BchB.</text>
</comment>
<comment type="similarity">
    <text evidence="1">Belongs to the NifH/BchL/ChlL family.</text>
</comment>
<sequence>MNIAIRNPVVARKEEGSLQVALDPDLKIETAKVFAVYGKGGIGKSTTSSNLSVAFSKLGKRVLQIGCDPKHDSTFTLTKRLAPTVIDALEAVNFHSEELRVEDFVVEGYNGVMCVEAGGPPAGTGCGGYVVGQTVKLLKEHHLLEDTDVVVFDVLGDVVCGGFASPLQHADRALIVTANDFDSIFAMNRIVAAIHAKSKNYGVRLGGVIANRSAKTDEIDRFNDAVGLKRLAHFPDLDVVRRSRLKKSTLFEMESSPELDAVTAEYMRLAETLWAGAEPCEAQPMKDRDLFEFLGFD</sequence>
<proteinExistence type="inferred from homology"/>
<reference key="1">
    <citation type="submission" date="2008-03" db="EMBL/GenBank/DDBJ databases">
        <title>Complete sequence of chromosome of Methylobacterium radiotolerans JCM 2831.</title>
        <authorList>
            <consortium name="US DOE Joint Genome Institute"/>
            <person name="Copeland A."/>
            <person name="Lucas S."/>
            <person name="Lapidus A."/>
            <person name="Glavina del Rio T."/>
            <person name="Dalin E."/>
            <person name="Tice H."/>
            <person name="Bruce D."/>
            <person name="Goodwin L."/>
            <person name="Pitluck S."/>
            <person name="Kiss H."/>
            <person name="Brettin T."/>
            <person name="Detter J.C."/>
            <person name="Han C."/>
            <person name="Kuske C.R."/>
            <person name="Schmutz J."/>
            <person name="Larimer F."/>
            <person name="Land M."/>
            <person name="Hauser L."/>
            <person name="Kyrpides N."/>
            <person name="Mikhailova N."/>
            <person name="Marx C.J."/>
            <person name="Richardson P."/>
        </authorList>
    </citation>
    <scope>NUCLEOTIDE SEQUENCE [LARGE SCALE GENOMIC DNA]</scope>
    <source>
        <strain>ATCC 27329 / DSM 1819 / JCM 2831 / NBRC 15690 / NCIMB 10815 / 0-1</strain>
    </source>
</reference>
<accession>B1LSF9</accession>